<reference key="1">
    <citation type="submission" date="2007-02" db="EMBL/GenBank/DDBJ databases">
        <title>Complete sequence of chromosome of Yersinia pestis Pestoides F.</title>
        <authorList>
            <consortium name="US DOE Joint Genome Institute"/>
            <person name="Copeland A."/>
            <person name="Lucas S."/>
            <person name="Lapidus A."/>
            <person name="Barry K."/>
            <person name="Detter J.C."/>
            <person name="Glavina del Rio T."/>
            <person name="Hammon N."/>
            <person name="Israni S."/>
            <person name="Dalin E."/>
            <person name="Tice H."/>
            <person name="Pitluck S."/>
            <person name="Di Bartolo G."/>
            <person name="Chain P."/>
            <person name="Malfatti S."/>
            <person name="Shin M."/>
            <person name="Vergez L."/>
            <person name="Schmutz J."/>
            <person name="Larimer F."/>
            <person name="Land M."/>
            <person name="Hauser L."/>
            <person name="Worsham P."/>
            <person name="Chu M."/>
            <person name="Bearden S."/>
            <person name="Garcia E."/>
            <person name="Richardson P."/>
        </authorList>
    </citation>
    <scope>NUCLEOTIDE SEQUENCE [LARGE SCALE GENOMIC DNA]</scope>
    <source>
        <strain>Pestoides F</strain>
    </source>
</reference>
<evidence type="ECO:0000255" key="1">
    <source>
        <dbReference type="HAMAP-Rule" id="MF_01529"/>
    </source>
</evidence>
<proteinExistence type="inferred from homology"/>
<dbReference type="EMBL" id="CP000668">
    <property type="protein sequence ID" value="ABP39481.1"/>
    <property type="molecule type" value="Genomic_DNA"/>
</dbReference>
<dbReference type="RefSeq" id="WP_002211217.1">
    <property type="nucleotide sequence ID" value="NZ_CP009715.1"/>
</dbReference>
<dbReference type="SMR" id="A4TJL9"/>
<dbReference type="GeneID" id="57976620"/>
<dbReference type="KEGG" id="ypp:YPDSF_1083"/>
<dbReference type="PATRIC" id="fig|386656.14.peg.2750"/>
<dbReference type="GO" id="GO:0005886">
    <property type="term" value="C:plasma membrane"/>
    <property type="evidence" value="ECO:0007669"/>
    <property type="project" value="UniProtKB-SubCell"/>
</dbReference>
<dbReference type="GO" id="GO:0022857">
    <property type="term" value="F:transmembrane transporter activity"/>
    <property type="evidence" value="ECO:0007669"/>
    <property type="project" value="UniProtKB-UniRule"/>
</dbReference>
<dbReference type="CDD" id="cd17329">
    <property type="entry name" value="MFS_MdtH_MDR_like"/>
    <property type="match status" value="1"/>
</dbReference>
<dbReference type="Gene3D" id="1.20.1250.20">
    <property type="entry name" value="MFS general substrate transporter like domains"/>
    <property type="match status" value="1"/>
</dbReference>
<dbReference type="HAMAP" id="MF_01529">
    <property type="entry name" value="MFS_MdtH"/>
    <property type="match status" value="1"/>
</dbReference>
<dbReference type="InterPro" id="IPR011701">
    <property type="entry name" value="MFS"/>
</dbReference>
<dbReference type="InterPro" id="IPR020846">
    <property type="entry name" value="MFS_dom"/>
</dbReference>
<dbReference type="InterPro" id="IPR036259">
    <property type="entry name" value="MFS_trans_sf"/>
</dbReference>
<dbReference type="InterPro" id="IPR050171">
    <property type="entry name" value="MFS_Transporters"/>
</dbReference>
<dbReference type="InterPro" id="IPR022855">
    <property type="entry name" value="Multidrug-R_MdtH"/>
</dbReference>
<dbReference type="NCBIfam" id="NF008650">
    <property type="entry name" value="PRK11646.1"/>
    <property type="match status" value="1"/>
</dbReference>
<dbReference type="PANTHER" id="PTHR23517:SF2">
    <property type="entry name" value="MULTIDRUG RESISTANCE PROTEIN MDTH"/>
    <property type="match status" value="1"/>
</dbReference>
<dbReference type="PANTHER" id="PTHR23517">
    <property type="entry name" value="RESISTANCE PROTEIN MDTM, PUTATIVE-RELATED-RELATED"/>
    <property type="match status" value="1"/>
</dbReference>
<dbReference type="Pfam" id="PF07690">
    <property type="entry name" value="MFS_1"/>
    <property type="match status" value="1"/>
</dbReference>
<dbReference type="SUPFAM" id="SSF103473">
    <property type="entry name" value="MFS general substrate transporter"/>
    <property type="match status" value="1"/>
</dbReference>
<dbReference type="PROSITE" id="PS50850">
    <property type="entry name" value="MFS"/>
    <property type="match status" value="1"/>
</dbReference>
<feature type="chain" id="PRO_1000068684" description="Multidrug resistance protein MdtH">
    <location>
        <begin position="1"/>
        <end position="401"/>
    </location>
</feature>
<feature type="transmembrane region" description="Helical" evidence="1">
    <location>
        <begin position="13"/>
        <end position="33"/>
    </location>
</feature>
<feature type="transmembrane region" description="Helical" evidence="1">
    <location>
        <begin position="34"/>
        <end position="54"/>
    </location>
</feature>
<feature type="transmembrane region" description="Helical" evidence="1">
    <location>
        <begin position="99"/>
        <end position="116"/>
    </location>
</feature>
<feature type="transmembrane region" description="Helical" evidence="1">
    <location>
        <begin position="139"/>
        <end position="159"/>
    </location>
</feature>
<feature type="transmembrane region" description="Helical" evidence="1">
    <location>
        <begin position="165"/>
        <end position="185"/>
    </location>
</feature>
<feature type="transmembrane region" description="Helical" evidence="1">
    <location>
        <begin position="214"/>
        <end position="234"/>
    </location>
</feature>
<feature type="transmembrane region" description="Helical" evidence="1">
    <location>
        <begin position="243"/>
        <end position="263"/>
    </location>
</feature>
<feature type="transmembrane region" description="Helical" evidence="1">
    <location>
        <begin position="277"/>
        <end position="297"/>
    </location>
</feature>
<feature type="transmembrane region" description="Helical" evidence="1">
    <location>
        <begin position="299"/>
        <end position="319"/>
    </location>
</feature>
<feature type="transmembrane region" description="Helical" evidence="1">
    <location>
        <begin position="340"/>
        <end position="360"/>
    </location>
</feature>
<feature type="transmembrane region" description="Helical" evidence="1">
    <location>
        <begin position="368"/>
        <end position="388"/>
    </location>
</feature>
<sequence>MALVSQARSLGKYFLLFDNLLVVLGFFVVFPLISIRFVDQLGWAALVVGLALGLRQLVQQGLGIFGGAIADRFGAKPMIVTGMLMRAAGFALMAMADEPWILWLACALSGLGGTLFDPPRTALVIKLTRPHERGRFYSLLMMQDSAGAVIGALIGSWLLQYDFHFVCWTGAAIFVLAAGWNAWLLPAYRISTVRAPMKEGLMRVLRDRRFVTYVLTLTGYYMLAVQVMLMLPIVVNELAGSPAAVKWMYAIEAALSLTLLYPLARWSEKRFSLEQRLMAGLLIMTLSLFPIGMITHLQTLFMFICFFYMGSILAEPARETLGASLADSRARGSYMGFSRLGLALGGALGYTGGGWMYDTGKTLDMPELPWFLLGIIGLITLAGLYWQFNRRRIESAMLSSS</sequence>
<accession>A4TJL9</accession>
<comment type="subcellular location">
    <subcellularLocation>
        <location evidence="1">Cell inner membrane</location>
        <topology evidence="1">Multi-pass membrane protein</topology>
    </subcellularLocation>
</comment>
<comment type="similarity">
    <text evidence="1">Belongs to the major facilitator superfamily. DHA1 family. MdtH (TC 2.A.1.2.21) subfamily.</text>
</comment>
<protein>
    <recommendedName>
        <fullName evidence="1">Multidrug resistance protein MdtH</fullName>
    </recommendedName>
</protein>
<gene>
    <name evidence="1" type="primary">mdtH</name>
    <name type="ordered locus">YPDSF_1083</name>
</gene>
<organism>
    <name type="scientific">Yersinia pestis (strain Pestoides F)</name>
    <dbReference type="NCBI Taxonomy" id="386656"/>
    <lineage>
        <taxon>Bacteria</taxon>
        <taxon>Pseudomonadati</taxon>
        <taxon>Pseudomonadota</taxon>
        <taxon>Gammaproteobacteria</taxon>
        <taxon>Enterobacterales</taxon>
        <taxon>Yersiniaceae</taxon>
        <taxon>Yersinia</taxon>
    </lineage>
</organism>
<name>MDTH_YERPP</name>
<keyword id="KW-0997">Cell inner membrane</keyword>
<keyword id="KW-1003">Cell membrane</keyword>
<keyword id="KW-0472">Membrane</keyword>
<keyword id="KW-0812">Transmembrane</keyword>
<keyword id="KW-1133">Transmembrane helix</keyword>
<keyword id="KW-0813">Transport</keyword>